<keyword id="KW-0997">Cell inner membrane</keyword>
<keyword id="KW-1003">Cell membrane</keyword>
<keyword id="KW-0472">Membrane</keyword>
<keyword id="KW-0769">Symport</keyword>
<keyword id="KW-0812">Transmembrane</keyword>
<keyword id="KW-1133">Transmembrane helix</keyword>
<keyword id="KW-0813">Transport</keyword>
<sequence>MKTSLFKSLYFQVLTAIAIGILLGHFYPEIGEQMKPLGDGFVKLIKMIIAPVIFCTVVTGIAGMESMKAVGRTGAVALLYFEIVSTIALIIGLIIVNVVQPGAGMNVDPATLDAKAVAVYADQAKDQGIVAFIMDVIPASVIGAFASGNILQVLLFAVLFGFALHRLGSKGQLIFNVIESFSQVIFGIINMIMRLAPIGAFGAMAFTIGKYGVGTLVQLGQLIICFYITCILFVVLVLGSIAKATGFSIFKFIRYIREELLIVLGTSSSESALPRMLDKMEKLGCRKSVVGLVIPTGYSFNLDGTSIYLTMAAVFIAQATNSQMDIVHQITLLIVLLLSSKGAAGVTGSGFIVLAATLSAVGHLPVAGLALILGIDRFMSEARALTNLVGNGVATIVVAKWVKELDHKKLDDVLNNRAPDGKTHELSS</sequence>
<reference key="1">
    <citation type="journal article" date="2006" name="BMC Genomics">
        <title>Complete genome sequence of Shigella flexneri 5b and comparison with Shigella flexneri 2a.</title>
        <authorList>
            <person name="Nie H."/>
            <person name="Yang F."/>
            <person name="Zhang X."/>
            <person name="Yang J."/>
            <person name="Chen L."/>
            <person name="Wang J."/>
            <person name="Xiong Z."/>
            <person name="Peng J."/>
            <person name="Sun L."/>
            <person name="Dong J."/>
            <person name="Xue Y."/>
            <person name="Xu X."/>
            <person name="Chen S."/>
            <person name="Yao Z."/>
            <person name="Shen Y."/>
            <person name="Jin Q."/>
        </authorList>
    </citation>
    <scope>NUCLEOTIDE SEQUENCE [LARGE SCALE GENOMIC DNA]</scope>
    <source>
        <strain>8401</strain>
    </source>
</reference>
<name>DCTA_SHIF8</name>
<dbReference type="EMBL" id="CP000266">
    <property type="protein sequence ID" value="ABF05591.1"/>
    <property type="molecule type" value="Genomic_DNA"/>
</dbReference>
<dbReference type="RefSeq" id="WP_000858214.1">
    <property type="nucleotide sequence ID" value="NC_008258.1"/>
</dbReference>
<dbReference type="SMR" id="Q0SZC4"/>
<dbReference type="GeneID" id="93778248"/>
<dbReference type="KEGG" id="sfv:SFV_3560"/>
<dbReference type="HOGENOM" id="CLU_019375_7_0_6"/>
<dbReference type="Proteomes" id="UP000000659">
    <property type="component" value="Chromosome"/>
</dbReference>
<dbReference type="GO" id="GO:0005886">
    <property type="term" value="C:plasma membrane"/>
    <property type="evidence" value="ECO:0007669"/>
    <property type="project" value="UniProtKB-SubCell"/>
</dbReference>
<dbReference type="GO" id="GO:0015138">
    <property type="term" value="F:fumarate transmembrane transporter activity"/>
    <property type="evidence" value="ECO:0007669"/>
    <property type="project" value="TreeGrafter"/>
</dbReference>
<dbReference type="GO" id="GO:0015366">
    <property type="term" value="F:malate:proton symporter activity"/>
    <property type="evidence" value="ECO:0007669"/>
    <property type="project" value="TreeGrafter"/>
</dbReference>
<dbReference type="GO" id="GO:0015141">
    <property type="term" value="F:succinate transmembrane transporter activity"/>
    <property type="evidence" value="ECO:0007669"/>
    <property type="project" value="TreeGrafter"/>
</dbReference>
<dbReference type="GO" id="GO:0070778">
    <property type="term" value="P:L-aspartate transmembrane transport"/>
    <property type="evidence" value="ECO:0007669"/>
    <property type="project" value="TreeGrafter"/>
</dbReference>
<dbReference type="FunFam" id="1.10.3860.10:FF:000001">
    <property type="entry name" value="C4-dicarboxylate transport protein"/>
    <property type="match status" value="1"/>
</dbReference>
<dbReference type="Gene3D" id="1.10.3860.10">
    <property type="entry name" value="Sodium:dicarboxylate symporter"/>
    <property type="match status" value="1"/>
</dbReference>
<dbReference type="HAMAP" id="MF_01300">
    <property type="entry name" value="C4_dicarb_transport"/>
    <property type="match status" value="1"/>
</dbReference>
<dbReference type="InterPro" id="IPR023954">
    <property type="entry name" value="C4_dicarb_transport"/>
</dbReference>
<dbReference type="InterPro" id="IPR001991">
    <property type="entry name" value="Na-dicarboxylate_symporter"/>
</dbReference>
<dbReference type="InterPro" id="IPR018107">
    <property type="entry name" value="Na-dicarboxylate_symporter_CS"/>
</dbReference>
<dbReference type="InterPro" id="IPR036458">
    <property type="entry name" value="Na:dicarbo_symporter_sf"/>
</dbReference>
<dbReference type="NCBIfam" id="NF002461">
    <property type="entry name" value="PRK01663.1"/>
    <property type="match status" value="1"/>
</dbReference>
<dbReference type="NCBIfam" id="NF009587">
    <property type="entry name" value="PRK13027.1"/>
    <property type="match status" value="1"/>
</dbReference>
<dbReference type="PANTHER" id="PTHR42865:SF1">
    <property type="entry name" value="AEROBIC C4-DICARBOXYLATE TRANSPORT PROTEIN"/>
    <property type="match status" value="1"/>
</dbReference>
<dbReference type="PANTHER" id="PTHR42865">
    <property type="entry name" value="PROTON/GLUTAMATE-ASPARTATE SYMPORTER"/>
    <property type="match status" value="1"/>
</dbReference>
<dbReference type="Pfam" id="PF00375">
    <property type="entry name" value="SDF"/>
    <property type="match status" value="1"/>
</dbReference>
<dbReference type="PRINTS" id="PR00173">
    <property type="entry name" value="EDTRNSPORT"/>
</dbReference>
<dbReference type="SUPFAM" id="SSF118215">
    <property type="entry name" value="Proton glutamate symport protein"/>
    <property type="match status" value="1"/>
</dbReference>
<dbReference type="PROSITE" id="PS00713">
    <property type="entry name" value="NA_DICARBOXYL_SYMP_1"/>
    <property type="match status" value="1"/>
</dbReference>
<dbReference type="PROSITE" id="PS00714">
    <property type="entry name" value="NA_DICARBOXYL_SYMP_2"/>
    <property type="match status" value="1"/>
</dbReference>
<accession>Q0SZC4</accession>
<comment type="function">
    <text evidence="1">Responsible for the transport of dicarboxylates such as succinate, fumarate, and malate from the periplasm across the membrane.</text>
</comment>
<comment type="subcellular location">
    <subcellularLocation>
        <location evidence="1">Cell inner membrane</location>
        <topology evidence="1">Multi-pass membrane protein</topology>
    </subcellularLocation>
</comment>
<comment type="similarity">
    <text evidence="1">Belongs to the dicarboxylate/amino acid:cation symporter (DAACS) (TC 2.A.23) family.</text>
</comment>
<protein>
    <recommendedName>
        <fullName evidence="1">C4-dicarboxylate transport protein</fullName>
    </recommendedName>
</protein>
<proteinExistence type="inferred from homology"/>
<gene>
    <name evidence="1" type="primary">dctA</name>
    <name type="ordered locus">SFV_3560</name>
</gene>
<feature type="chain" id="PRO_1000067467" description="C4-dicarboxylate transport protein">
    <location>
        <begin position="1"/>
        <end position="428"/>
    </location>
</feature>
<feature type="transmembrane region" description="Helical" evidence="1">
    <location>
        <begin position="8"/>
        <end position="28"/>
    </location>
</feature>
<feature type="transmembrane region" description="Helical" evidence="1">
    <location>
        <begin position="44"/>
        <end position="64"/>
    </location>
</feature>
<feature type="transmembrane region" description="Helical" evidence="1">
    <location>
        <begin position="76"/>
        <end position="96"/>
    </location>
</feature>
<feature type="transmembrane region" description="Helical" evidence="1">
    <location>
        <begin position="142"/>
        <end position="162"/>
    </location>
</feature>
<feature type="transmembrane region" description="Helical" evidence="1">
    <location>
        <begin position="184"/>
        <end position="204"/>
    </location>
</feature>
<feature type="transmembrane region" description="Helical" evidence="1">
    <location>
        <begin position="222"/>
        <end position="242"/>
    </location>
</feature>
<feature type="transmembrane region" description="Helical" evidence="1">
    <location>
        <begin position="326"/>
        <end position="346"/>
    </location>
</feature>
<feature type="transmembrane region" description="Helical" evidence="1">
    <location>
        <begin position="352"/>
        <end position="372"/>
    </location>
</feature>
<evidence type="ECO:0000255" key="1">
    <source>
        <dbReference type="HAMAP-Rule" id="MF_01300"/>
    </source>
</evidence>
<organism>
    <name type="scientific">Shigella flexneri serotype 5b (strain 8401)</name>
    <dbReference type="NCBI Taxonomy" id="373384"/>
    <lineage>
        <taxon>Bacteria</taxon>
        <taxon>Pseudomonadati</taxon>
        <taxon>Pseudomonadota</taxon>
        <taxon>Gammaproteobacteria</taxon>
        <taxon>Enterobacterales</taxon>
        <taxon>Enterobacteriaceae</taxon>
        <taxon>Shigella</taxon>
    </lineage>
</organism>